<protein>
    <recommendedName>
        <fullName evidence="1">Phosphoglycerate kinase</fullName>
        <ecNumber evidence="1">2.7.2.3</ecNumber>
    </recommendedName>
</protein>
<reference key="1">
    <citation type="journal article" date="2004" name="Nucleic Acids Res.">
        <title>Comparative analysis of the Borrelia garinii genome.</title>
        <authorList>
            <person name="Gloeckner G."/>
            <person name="Lehmann R."/>
            <person name="Romualdi A."/>
            <person name="Pradella S."/>
            <person name="Schulte-Spechtel U."/>
            <person name="Schilhabel M."/>
            <person name="Wilske B."/>
            <person name="Suehnel J."/>
            <person name="Platzer M."/>
        </authorList>
    </citation>
    <scope>NUCLEOTIDE SEQUENCE [LARGE SCALE GENOMIC DNA]</scope>
    <source>
        <strain>ATCC BAA-2496 / DSM 23469 / PBi</strain>
    </source>
</reference>
<feature type="chain" id="PRO_1000192806" description="Phosphoglycerate kinase">
    <location>
        <begin position="1"/>
        <end position="393"/>
    </location>
</feature>
<feature type="binding site" evidence="1">
    <location>
        <begin position="22"/>
        <end position="24"/>
    </location>
    <ligand>
        <name>substrate</name>
    </ligand>
</feature>
<feature type="binding site" evidence="1">
    <location>
        <position position="37"/>
    </location>
    <ligand>
        <name>substrate</name>
    </ligand>
</feature>
<feature type="binding site" evidence="1">
    <location>
        <begin position="60"/>
        <end position="63"/>
    </location>
    <ligand>
        <name>substrate</name>
    </ligand>
</feature>
<feature type="binding site" evidence="1">
    <location>
        <position position="119"/>
    </location>
    <ligand>
        <name>substrate</name>
    </ligand>
</feature>
<feature type="binding site" evidence="1">
    <location>
        <position position="152"/>
    </location>
    <ligand>
        <name>substrate</name>
    </ligand>
</feature>
<feature type="binding site" evidence="1">
    <location>
        <position position="202"/>
    </location>
    <ligand>
        <name>ATP</name>
        <dbReference type="ChEBI" id="CHEBI:30616"/>
    </ligand>
</feature>
<feature type="binding site" evidence="1">
    <location>
        <position position="293"/>
    </location>
    <ligand>
        <name>ATP</name>
        <dbReference type="ChEBI" id="CHEBI:30616"/>
    </ligand>
</feature>
<feature type="binding site" evidence="1">
    <location>
        <position position="324"/>
    </location>
    <ligand>
        <name>ATP</name>
        <dbReference type="ChEBI" id="CHEBI:30616"/>
    </ligand>
</feature>
<feature type="binding site" evidence="1">
    <location>
        <begin position="350"/>
        <end position="353"/>
    </location>
    <ligand>
        <name>ATP</name>
        <dbReference type="ChEBI" id="CHEBI:30616"/>
    </ligand>
</feature>
<evidence type="ECO:0000255" key="1">
    <source>
        <dbReference type="HAMAP-Rule" id="MF_00145"/>
    </source>
</evidence>
<dbReference type="EC" id="2.7.2.3" evidence="1"/>
<dbReference type="EMBL" id="CP000013">
    <property type="protein sequence ID" value="AAU06913.1"/>
    <property type="molecule type" value="Genomic_DNA"/>
</dbReference>
<dbReference type="RefSeq" id="WP_011193408.1">
    <property type="nucleotide sequence ID" value="NZ_CP028872.1"/>
</dbReference>
<dbReference type="SMR" id="Q662V8"/>
<dbReference type="GeneID" id="45160853"/>
<dbReference type="KEGG" id="bga:BG0055"/>
<dbReference type="eggNOG" id="COG0126">
    <property type="taxonomic scope" value="Bacteria"/>
</dbReference>
<dbReference type="HOGENOM" id="CLU_025427_0_2_12"/>
<dbReference type="OrthoDB" id="9808460at2"/>
<dbReference type="UniPathway" id="UPA00109">
    <property type="reaction ID" value="UER00185"/>
</dbReference>
<dbReference type="Proteomes" id="UP000002276">
    <property type="component" value="Chromosome"/>
</dbReference>
<dbReference type="GO" id="GO:0005829">
    <property type="term" value="C:cytosol"/>
    <property type="evidence" value="ECO:0007669"/>
    <property type="project" value="TreeGrafter"/>
</dbReference>
<dbReference type="GO" id="GO:0043531">
    <property type="term" value="F:ADP binding"/>
    <property type="evidence" value="ECO:0007669"/>
    <property type="project" value="TreeGrafter"/>
</dbReference>
<dbReference type="GO" id="GO:0005524">
    <property type="term" value="F:ATP binding"/>
    <property type="evidence" value="ECO:0007669"/>
    <property type="project" value="UniProtKB-KW"/>
</dbReference>
<dbReference type="GO" id="GO:0004618">
    <property type="term" value="F:phosphoglycerate kinase activity"/>
    <property type="evidence" value="ECO:0007669"/>
    <property type="project" value="UniProtKB-UniRule"/>
</dbReference>
<dbReference type="GO" id="GO:0006094">
    <property type="term" value="P:gluconeogenesis"/>
    <property type="evidence" value="ECO:0007669"/>
    <property type="project" value="TreeGrafter"/>
</dbReference>
<dbReference type="GO" id="GO:0006096">
    <property type="term" value="P:glycolytic process"/>
    <property type="evidence" value="ECO:0007669"/>
    <property type="project" value="UniProtKB-UniRule"/>
</dbReference>
<dbReference type="CDD" id="cd00318">
    <property type="entry name" value="Phosphoglycerate_kinase"/>
    <property type="match status" value="1"/>
</dbReference>
<dbReference type="FunFam" id="3.40.50.1260:FF:000003">
    <property type="entry name" value="Phosphoglycerate kinase"/>
    <property type="match status" value="1"/>
</dbReference>
<dbReference type="FunFam" id="3.40.50.1260:FF:000006">
    <property type="entry name" value="Phosphoglycerate kinase"/>
    <property type="match status" value="1"/>
</dbReference>
<dbReference type="Gene3D" id="3.40.50.1260">
    <property type="entry name" value="Phosphoglycerate kinase, N-terminal domain"/>
    <property type="match status" value="2"/>
</dbReference>
<dbReference type="HAMAP" id="MF_00145">
    <property type="entry name" value="Phosphoglyc_kinase"/>
    <property type="match status" value="1"/>
</dbReference>
<dbReference type="InterPro" id="IPR001576">
    <property type="entry name" value="Phosphoglycerate_kinase"/>
</dbReference>
<dbReference type="InterPro" id="IPR015824">
    <property type="entry name" value="Phosphoglycerate_kinase_N"/>
</dbReference>
<dbReference type="InterPro" id="IPR036043">
    <property type="entry name" value="Phosphoglycerate_kinase_sf"/>
</dbReference>
<dbReference type="PANTHER" id="PTHR11406">
    <property type="entry name" value="PHOSPHOGLYCERATE KINASE"/>
    <property type="match status" value="1"/>
</dbReference>
<dbReference type="PANTHER" id="PTHR11406:SF23">
    <property type="entry name" value="PHOSPHOGLYCERATE KINASE 1, CHLOROPLASTIC-RELATED"/>
    <property type="match status" value="1"/>
</dbReference>
<dbReference type="Pfam" id="PF00162">
    <property type="entry name" value="PGK"/>
    <property type="match status" value="1"/>
</dbReference>
<dbReference type="PIRSF" id="PIRSF000724">
    <property type="entry name" value="Pgk"/>
    <property type="match status" value="1"/>
</dbReference>
<dbReference type="PRINTS" id="PR00477">
    <property type="entry name" value="PHGLYCKINASE"/>
</dbReference>
<dbReference type="SUPFAM" id="SSF53748">
    <property type="entry name" value="Phosphoglycerate kinase"/>
    <property type="match status" value="1"/>
</dbReference>
<sequence>MSIKTVKDFNSFAGKRALVRCDFNVPLKEGNISDDTRIKAALPTIEYLKEKGARIVLISHLGRPEGKKNLKYSLKPVANKLSELLGQDVKMLSDCIGREIVNNTLQMKDGDVVLLENVRFYAEEEKNDKNFAKKLSENGDVFVNDAFGAAHRAHASTVGVSDYLPSVGGFLMEKEDKFLGEVLKNPERPFVSIIGGSKVSSKIAVLESLLSKSNVVVIGGGMAYTFLHSKGYSIGKSLLESEYIDIASSFLKKAKELDVKVILPLDHIVADDFNKNSTPEYIDSFDIPENKIGMDVGGKTLKEIEKVIKTAKTIIWNGPLGVFEFDSFSKGTAMVAEMVASCAGLTIVGGGDSVAAVNKFNLSDKITHVSTGGGASLEYLEGKILPGIKVLEK</sequence>
<name>PGK_BORGP</name>
<comment type="catalytic activity">
    <reaction evidence="1">
        <text>(2R)-3-phosphoglycerate + ATP = (2R)-3-phospho-glyceroyl phosphate + ADP</text>
        <dbReference type="Rhea" id="RHEA:14801"/>
        <dbReference type="ChEBI" id="CHEBI:30616"/>
        <dbReference type="ChEBI" id="CHEBI:57604"/>
        <dbReference type="ChEBI" id="CHEBI:58272"/>
        <dbReference type="ChEBI" id="CHEBI:456216"/>
        <dbReference type="EC" id="2.7.2.3"/>
    </reaction>
</comment>
<comment type="pathway">
    <text evidence="1">Carbohydrate degradation; glycolysis; pyruvate from D-glyceraldehyde 3-phosphate: step 2/5.</text>
</comment>
<comment type="subunit">
    <text evidence="1">Monomer.</text>
</comment>
<comment type="subcellular location">
    <subcellularLocation>
        <location evidence="1">Cytoplasm</location>
    </subcellularLocation>
</comment>
<comment type="similarity">
    <text evidence="1">Belongs to the phosphoglycerate kinase family.</text>
</comment>
<proteinExistence type="inferred from homology"/>
<accession>Q662V8</accession>
<keyword id="KW-0067">ATP-binding</keyword>
<keyword id="KW-0963">Cytoplasm</keyword>
<keyword id="KW-0324">Glycolysis</keyword>
<keyword id="KW-0418">Kinase</keyword>
<keyword id="KW-0547">Nucleotide-binding</keyword>
<keyword id="KW-0808">Transferase</keyword>
<organism>
    <name type="scientific">Borrelia garinii subsp. bavariensis (strain ATCC BAA-2496 / DSM 23469 / PBi)</name>
    <name type="common">Borreliella bavariensis</name>
    <dbReference type="NCBI Taxonomy" id="290434"/>
    <lineage>
        <taxon>Bacteria</taxon>
        <taxon>Pseudomonadati</taxon>
        <taxon>Spirochaetota</taxon>
        <taxon>Spirochaetia</taxon>
        <taxon>Spirochaetales</taxon>
        <taxon>Borreliaceae</taxon>
        <taxon>Borreliella</taxon>
    </lineage>
</organism>
<gene>
    <name evidence="1" type="primary">pgk</name>
    <name type="ordered locus">BG0055</name>
</gene>